<gene>
    <name type="primary">ACT7</name>
    <name type="synonym">AC7</name>
    <name type="synonym">RAC7</name>
    <name type="ordered locus">Os01g0866100</name>
    <name type="ordered locus">LOC_Os01g64630</name>
    <name type="ORF">P0505D12.32-2</name>
</gene>
<feature type="chain" id="PRO_0000088973" description="Actin-7">
    <location>
        <begin position="1"/>
        <end position="376"/>
    </location>
</feature>
<accession>P0C540</accession>
<accession>P17300</accession>
<accession>Q0JHG1</accession>
<accession>Q5N9D6</accession>
<protein>
    <recommendedName>
        <fullName>Actin-7</fullName>
        <ecNumber evidence="1">3.6.4.-</ecNumber>
    </recommendedName>
</protein>
<organism>
    <name type="scientific">Oryza sativa subsp. japonica</name>
    <name type="common">Rice</name>
    <dbReference type="NCBI Taxonomy" id="39947"/>
    <lineage>
        <taxon>Eukaryota</taxon>
        <taxon>Viridiplantae</taxon>
        <taxon>Streptophyta</taxon>
        <taxon>Embryophyta</taxon>
        <taxon>Tracheophyta</taxon>
        <taxon>Spermatophyta</taxon>
        <taxon>Magnoliopsida</taxon>
        <taxon>Liliopsida</taxon>
        <taxon>Poales</taxon>
        <taxon>Poaceae</taxon>
        <taxon>BOP clade</taxon>
        <taxon>Oryzoideae</taxon>
        <taxon>Oryzeae</taxon>
        <taxon>Oryzinae</taxon>
        <taxon>Oryza</taxon>
        <taxon>Oryza sativa</taxon>
    </lineage>
</organism>
<name>ACT7_ORYSJ</name>
<reference key="1">
    <citation type="journal article" date="2002" name="Nature">
        <title>The genome sequence and structure of rice chromosome 1.</title>
        <authorList>
            <person name="Sasaki T."/>
            <person name="Matsumoto T."/>
            <person name="Yamamoto K."/>
            <person name="Sakata K."/>
            <person name="Baba T."/>
            <person name="Katayose Y."/>
            <person name="Wu J."/>
            <person name="Niimura Y."/>
            <person name="Cheng Z."/>
            <person name="Nagamura Y."/>
            <person name="Antonio B.A."/>
            <person name="Kanamori H."/>
            <person name="Hosokawa S."/>
            <person name="Masukawa M."/>
            <person name="Arikawa K."/>
            <person name="Chiden Y."/>
            <person name="Hayashi M."/>
            <person name="Okamoto M."/>
            <person name="Ando T."/>
            <person name="Aoki H."/>
            <person name="Arita K."/>
            <person name="Hamada M."/>
            <person name="Harada C."/>
            <person name="Hijishita S."/>
            <person name="Honda M."/>
            <person name="Ichikawa Y."/>
            <person name="Idonuma A."/>
            <person name="Iijima M."/>
            <person name="Ikeda M."/>
            <person name="Ikeno M."/>
            <person name="Ito S."/>
            <person name="Ito T."/>
            <person name="Ito Y."/>
            <person name="Ito Y."/>
            <person name="Iwabuchi A."/>
            <person name="Kamiya K."/>
            <person name="Karasawa W."/>
            <person name="Katagiri S."/>
            <person name="Kikuta A."/>
            <person name="Kobayashi N."/>
            <person name="Kono I."/>
            <person name="Machita K."/>
            <person name="Maehara T."/>
            <person name="Mizuno H."/>
            <person name="Mizubayashi T."/>
            <person name="Mukai Y."/>
            <person name="Nagasaki H."/>
            <person name="Nakashima M."/>
            <person name="Nakama Y."/>
            <person name="Nakamichi Y."/>
            <person name="Nakamura M."/>
            <person name="Namiki N."/>
            <person name="Negishi M."/>
            <person name="Ohta I."/>
            <person name="Ono N."/>
            <person name="Saji S."/>
            <person name="Sakai K."/>
            <person name="Shibata M."/>
            <person name="Shimokawa T."/>
            <person name="Shomura A."/>
            <person name="Song J."/>
            <person name="Takazaki Y."/>
            <person name="Terasawa K."/>
            <person name="Tsuji K."/>
            <person name="Waki K."/>
            <person name="Yamagata H."/>
            <person name="Yamane H."/>
            <person name="Yoshiki S."/>
            <person name="Yoshihara R."/>
            <person name="Yukawa K."/>
            <person name="Zhong H."/>
            <person name="Iwama H."/>
            <person name="Endo T."/>
            <person name="Ito H."/>
            <person name="Hahn J.H."/>
            <person name="Kim H.-I."/>
            <person name="Eun M.-Y."/>
            <person name="Yano M."/>
            <person name="Jiang J."/>
            <person name="Gojobori T."/>
        </authorList>
    </citation>
    <scope>NUCLEOTIDE SEQUENCE [LARGE SCALE GENOMIC DNA]</scope>
    <source>
        <strain>cv. Nipponbare</strain>
    </source>
</reference>
<reference key="2">
    <citation type="journal article" date="2005" name="Nature">
        <title>The map-based sequence of the rice genome.</title>
        <authorList>
            <consortium name="International rice genome sequencing project (IRGSP)"/>
        </authorList>
    </citation>
    <scope>NUCLEOTIDE SEQUENCE [LARGE SCALE GENOMIC DNA]</scope>
    <source>
        <strain>cv. Nipponbare</strain>
    </source>
</reference>
<reference key="3">
    <citation type="journal article" date="2008" name="Nucleic Acids Res.">
        <title>The rice annotation project database (RAP-DB): 2008 update.</title>
        <authorList>
            <consortium name="The rice annotation project (RAP)"/>
        </authorList>
    </citation>
    <scope>GENOME REANNOTATION</scope>
    <source>
        <strain>cv. Nipponbare</strain>
    </source>
</reference>
<reference key="4">
    <citation type="journal article" date="2013" name="Rice">
        <title>Improvement of the Oryza sativa Nipponbare reference genome using next generation sequence and optical map data.</title>
        <authorList>
            <person name="Kawahara Y."/>
            <person name="de la Bastide M."/>
            <person name="Hamilton J.P."/>
            <person name="Kanamori H."/>
            <person name="McCombie W.R."/>
            <person name="Ouyang S."/>
            <person name="Schwartz D.C."/>
            <person name="Tanaka T."/>
            <person name="Wu J."/>
            <person name="Zhou S."/>
            <person name="Childs K.L."/>
            <person name="Davidson R.M."/>
            <person name="Lin H."/>
            <person name="Quesada-Ocampo L."/>
            <person name="Vaillancourt B."/>
            <person name="Sakai H."/>
            <person name="Lee S.S."/>
            <person name="Kim J."/>
            <person name="Numa H."/>
            <person name="Itoh T."/>
            <person name="Buell C.R."/>
            <person name="Matsumoto T."/>
        </authorList>
    </citation>
    <scope>GENOME REANNOTATION</scope>
    <source>
        <strain>cv. Nipponbare</strain>
    </source>
</reference>
<dbReference type="EC" id="3.6.4.-" evidence="1"/>
<dbReference type="EMBL" id="AP003270">
    <property type="protein sequence ID" value="BAD81914.1"/>
    <property type="molecule type" value="Genomic_DNA"/>
</dbReference>
<dbReference type="EMBL" id="AP008207">
    <property type="protein sequence ID" value="BAF06817.1"/>
    <property type="status" value="ALT_SEQ"/>
    <property type="molecule type" value="Genomic_DNA"/>
</dbReference>
<dbReference type="EMBL" id="AP014957">
    <property type="status" value="NOT_ANNOTATED_CDS"/>
    <property type="molecule type" value="Genomic_DNA"/>
</dbReference>
<dbReference type="RefSeq" id="XP_015641450.1">
    <property type="nucleotide sequence ID" value="XM_015785964.1"/>
</dbReference>
<dbReference type="SMR" id="P0C540"/>
<dbReference type="FunCoup" id="P0C540">
    <property type="interactions" value="2315"/>
</dbReference>
<dbReference type="STRING" id="39947.P0C540"/>
<dbReference type="PaxDb" id="39947-P0C540"/>
<dbReference type="KEGG" id="dosa:Os01g0866100"/>
<dbReference type="InParanoid" id="P0C540"/>
<dbReference type="OrthoDB" id="2011723at2759"/>
<dbReference type="Proteomes" id="UP000000763">
    <property type="component" value="Chromosome 1"/>
</dbReference>
<dbReference type="Proteomes" id="UP000059680">
    <property type="component" value="Chromosome 1"/>
</dbReference>
<dbReference type="GO" id="GO:0005737">
    <property type="term" value="C:cytoplasm"/>
    <property type="evidence" value="ECO:0007669"/>
    <property type="project" value="UniProtKB-KW"/>
</dbReference>
<dbReference type="GO" id="GO:0005856">
    <property type="term" value="C:cytoskeleton"/>
    <property type="evidence" value="ECO:0007669"/>
    <property type="project" value="UniProtKB-SubCell"/>
</dbReference>
<dbReference type="GO" id="GO:0005524">
    <property type="term" value="F:ATP binding"/>
    <property type="evidence" value="ECO:0007669"/>
    <property type="project" value="UniProtKB-KW"/>
</dbReference>
<dbReference type="GO" id="GO:0016787">
    <property type="term" value="F:hydrolase activity"/>
    <property type="evidence" value="ECO:0007669"/>
    <property type="project" value="UniProtKB-KW"/>
</dbReference>
<dbReference type="CDD" id="cd10224">
    <property type="entry name" value="ASKHA_NBD_actin"/>
    <property type="match status" value="1"/>
</dbReference>
<dbReference type="FunFam" id="2.30.36.70:FF:000001">
    <property type="entry name" value="Actin, alpha skeletal muscle"/>
    <property type="match status" value="1"/>
</dbReference>
<dbReference type="FunFam" id="3.30.420.40:FF:000050">
    <property type="entry name" value="Actin, alpha skeletal muscle"/>
    <property type="match status" value="1"/>
</dbReference>
<dbReference type="FunFam" id="3.30.420.40:FF:000205">
    <property type="entry name" value="Actin, alpha skeletal muscle"/>
    <property type="match status" value="1"/>
</dbReference>
<dbReference type="FunFam" id="3.30.420.40:FF:000291">
    <property type="entry name" value="Actin, alpha skeletal muscle"/>
    <property type="match status" value="1"/>
</dbReference>
<dbReference type="FunFam" id="3.90.640.10:FF:000001">
    <property type="entry name" value="Actin, muscle"/>
    <property type="match status" value="1"/>
</dbReference>
<dbReference type="Gene3D" id="3.30.420.40">
    <property type="match status" value="2"/>
</dbReference>
<dbReference type="Gene3D" id="3.90.640.10">
    <property type="entry name" value="Actin, Chain A, domain 4"/>
    <property type="match status" value="1"/>
</dbReference>
<dbReference type="InterPro" id="IPR004000">
    <property type="entry name" value="Actin"/>
</dbReference>
<dbReference type="InterPro" id="IPR020902">
    <property type="entry name" value="Actin/actin-like_CS"/>
</dbReference>
<dbReference type="InterPro" id="IPR004001">
    <property type="entry name" value="Actin_CS"/>
</dbReference>
<dbReference type="InterPro" id="IPR043129">
    <property type="entry name" value="ATPase_NBD"/>
</dbReference>
<dbReference type="PANTHER" id="PTHR11937">
    <property type="entry name" value="ACTIN"/>
    <property type="match status" value="1"/>
</dbReference>
<dbReference type="Pfam" id="PF00022">
    <property type="entry name" value="Actin"/>
    <property type="match status" value="1"/>
</dbReference>
<dbReference type="PRINTS" id="PR00190">
    <property type="entry name" value="ACTIN"/>
</dbReference>
<dbReference type="SMART" id="SM00268">
    <property type="entry name" value="ACTIN"/>
    <property type="match status" value="1"/>
</dbReference>
<dbReference type="SUPFAM" id="SSF53067">
    <property type="entry name" value="Actin-like ATPase domain"/>
    <property type="match status" value="2"/>
</dbReference>
<dbReference type="PROSITE" id="PS00406">
    <property type="entry name" value="ACTINS_1"/>
    <property type="match status" value="1"/>
</dbReference>
<dbReference type="PROSITE" id="PS00432">
    <property type="entry name" value="ACTINS_2"/>
    <property type="match status" value="1"/>
</dbReference>
<dbReference type="PROSITE" id="PS01132">
    <property type="entry name" value="ACTINS_ACT_LIKE"/>
    <property type="match status" value="1"/>
</dbReference>
<evidence type="ECO:0000250" key="1">
    <source>
        <dbReference type="UniProtKB" id="P68137"/>
    </source>
</evidence>
<evidence type="ECO:0000305" key="2"/>
<proteinExistence type="inferred from homology"/>
<comment type="function">
    <text>Actins are highly conserved proteins that are involved in various types of cell motility and are ubiquitously expressed in all eukaryotic cells.</text>
</comment>
<comment type="function">
    <text>Essential component of cell cytoskeleton; plays an important role in cytoplasmic streaming, cell shape determination, cell division, organelle movement and extension growth.</text>
</comment>
<comment type="catalytic activity">
    <reaction evidence="1">
        <text>ATP + H2O = ADP + phosphate + H(+)</text>
        <dbReference type="Rhea" id="RHEA:13065"/>
        <dbReference type="ChEBI" id="CHEBI:15377"/>
        <dbReference type="ChEBI" id="CHEBI:15378"/>
        <dbReference type="ChEBI" id="CHEBI:30616"/>
        <dbReference type="ChEBI" id="CHEBI:43474"/>
        <dbReference type="ChEBI" id="CHEBI:456216"/>
    </reaction>
</comment>
<comment type="subcellular location">
    <subcellularLocation>
        <location>Cytoplasm</location>
        <location>Cytoskeleton</location>
    </subcellularLocation>
</comment>
<comment type="miscellaneous">
    <text>There are at least eight actin genes in rice.</text>
</comment>
<comment type="similarity">
    <text evidence="2">Belongs to the actin family.</text>
</comment>
<comment type="sequence caution" evidence="2">
    <conflict type="erroneous gene model prediction">
        <sequence resource="EMBL-CDS" id="BAF06817"/>
    </conflict>
</comment>
<keyword id="KW-0067">ATP-binding</keyword>
<keyword id="KW-0963">Cytoplasm</keyword>
<keyword id="KW-0206">Cytoskeleton</keyword>
<keyword id="KW-0378">Hydrolase</keyword>
<keyword id="KW-0547">Nucleotide-binding</keyword>
<keyword id="KW-1185">Reference proteome</keyword>
<sequence>MAEEDIQPIVCDNGTGMVKAGFAGDDAPRAVFPSIVGRPRHTGVMVGMGQKDAYVGDEAQSKRGILTLKYPIEHGIVNNWDDMEKIWHHTFYNELRVAPEEHPVLLTEAPMNPKANREKMTQIMFETFNCPAMYVAIQAVLSLYASGRTTGIVLDSGDGVSHTVPIYEGFTLPHAILRLDLAGRDLTDNLMKILTERGYSFTTTAEREIVRDIKEKLAYVALDYEQELDTARSSSSIEKSYELPDGQVITIGAERFRCPEVLFQPSFIGMEAPGIHEATYNSIMKCDVDIRKDLYGNVVLSGGSTMFPGIGDRMSKEITALAPGSMKIKVVAPPERKYSVWIGGSILASLSTFQQMWISKAEYDESGPGIVHMKCF</sequence>